<evidence type="ECO:0000255" key="1">
    <source>
        <dbReference type="HAMAP-Rule" id="MF_01458"/>
    </source>
</evidence>
<evidence type="ECO:0000256" key="2">
    <source>
        <dbReference type="SAM" id="MobiDB-lite"/>
    </source>
</evidence>
<comment type="function">
    <text evidence="1">Acts as a processive, ATP-dependent zinc metallopeptidase for both cytoplasmic and membrane proteins. Plays a role in the quality control of integral membrane proteins.</text>
</comment>
<comment type="cofactor">
    <cofactor evidence="1">
        <name>Zn(2+)</name>
        <dbReference type="ChEBI" id="CHEBI:29105"/>
    </cofactor>
    <text evidence="1">Binds 1 zinc ion per subunit.</text>
</comment>
<comment type="subunit">
    <text evidence="1">Homohexamer.</text>
</comment>
<comment type="subcellular location">
    <subcellularLocation>
        <location evidence="1">Cell membrane</location>
        <topology evidence="1">Multi-pass membrane protein</topology>
        <orientation evidence="1">Cytoplasmic side</orientation>
    </subcellularLocation>
</comment>
<comment type="similarity">
    <text evidence="1">In the central section; belongs to the AAA ATPase family.</text>
</comment>
<comment type="similarity">
    <text evidence="1">In the C-terminal section; belongs to the peptidase M41 family.</text>
</comment>
<name>FTSH_THET1</name>
<reference key="1">
    <citation type="journal article" date="2010" name="Stand. Genomic Sci.">
        <title>Complete genome sequence of 'Thermobaculum terrenum' type strain (YNP1).</title>
        <authorList>
            <person name="Kiss H."/>
            <person name="Cleland D."/>
            <person name="Lapidus A."/>
            <person name="Lucas S."/>
            <person name="Del Rio T.G."/>
            <person name="Nolan M."/>
            <person name="Tice H."/>
            <person name="Han C."/>
            <person name="Goodwin L."/>
            <person name="Pitluck S."/>
            <person name="Liolios K."/>
            <person name="Ivanova N."/>
            <person name="Mavromatis K."/>
            <person name="Ovchinnikova G."/>
            <person name="Pati A."/>
            <person name="Chen A."/>
            <person name="Palaniappan K."/>
            <person name="Land M."/>
            <person name="Hauser L."/>
            <person name="Chang Y.J."/>
            <person name="Jeffries C.D."/>
            <person name="Lu M."/>
            <person name="Brettin T."/>
            <person name="Detter J.C."/>
            <person name="Goeker M."/>
            <person name="Tindall B.J."/>
            <person name="Beck B."/>
            <person name="McDermott T.R."/>
            <person name="Woyke T."/>
            <person name="Bristow J."/>
            <person name="Eisen J.A."/>
            <person name="Markowitz V."/>
            <person name="Hugenholtz P."/>
            <person name="Kyrpides N.C."/>
            <person name="Klenk H.P."/>
            <person name="Cheng J.F."/>
        </authorList>
    </citation>
    <scope>NUCLEOTIDE SEQUENCE [LARGE SCALE GENOMIC DNA]</scope>
    <source>
        <strain>ATCC BAA-798 / CCMEE 7001 / YNP1</strain>
    </source>
</reference>
<protein>
    <recommendedName>
        <fullName evidence="1">ATP-dependent zinc metalloprotease FtsH</fullName>
        <ecNumber evidence="1">3.4.24.-</ecNumber>
    </recommendedName>
</protein>
<feature type="chain" id="PRO_0000400408" description="ATP-dependent zinc metalloprotease FtsH">
    <location>
        <begin position="1"/>
        <end position="646"/>
    </location>
</feature>
<feature type="topological domain" description="Cytoplasmic" evidence="1">
    <location>
        <begin position="1"/>
        <end position="35"/>
    </location>
</feature>
<feature type="transmembrane region" description="Helical" evidence="1">
    <location>
        <begin position="36"/>
        <end position="56"/>
    </location>
</feature>
<feature type="topological domain" description="Extracellular" evidence="1">
    <location>
        <begin position="57"/>
        <end position="144"/>
    </location>
</feature>
<feature type="transmembrane region" description="Helical" evidence="1">
    <location>
        <begin position="145"/>
        <end position="165"/>
    </location>
</feature>
<feature type="topological domain" description="Cytoplasmic" evidence="1">
    <location>
        <begin position="166"/>
        <end position="646"/>
    </location>
</feature>
<feature type="region of interest" description="Disordered" evidence="2">
    <location>
        <begin position="1"/>
        <end position="27"/>
    </location>
</feature>
<feature type="compositionally biased region" description="Basic and acidic residues" evidence="2">
    <location>
        <begin position="7"/>
        <end position="26"/>
    </location>
</feature>
<feature type="active site" evidence="1">
    <location>
        <position position="460"/>
    </location>
</feature>
<feature type="binding site" evidence="1">
    <location>
        <begin position="237"/>
        <end position="244"/>
    </location>
    <ligand>
        <name>ATP</name>
        <dbReference type="ChEBI" id="CHEBI:30616"/>
    </ligand>
</feature>
<feature type="binding site" evidence="1">
    <location>
        <position position="459"/>
    </location>
    <ligand>
        <name>Zn(2+)</name>
        <dbReference type="ChEBI" id="CHEBI:29105"/>
        <note>catalytic</note>
    </ligand>
</feature>
<feature type="binding site" evidence="1">
    <location>
        <position position="463"/>
    </location>
    <ligand>
        <name>Zn(2+)</name>
        <dbReference type="ChEBI" id="CHEBI:29105"/>
        <note>catalytic</note>
    </ligand>
</feature>
<feature type="binding site" evidence="1">
    <location>
        <position position="535"/>
    </location>
    <ligand>
        <name>Zn(2+)</name>
        <dbReference type="ChEBI" id="CHEBI:29105"/>
        <note>catalytic</note>
    </ligand>
</feature>
<organism>
    <name type="scientific">Thermobaculum terrenum (strain ATCC BAA-798 / CCMEE 7001 / YNP1)</name>
    <dbReference type="NCBI Taxonomy" id="525904"/>
    <lineage>
        <taxon>Bacteria</taxon>
        <taxon>Bacillati</taxon>
        <taxon>Chloroflexota</taxon>
        <taxon>Chloroflexia</taxon>
        <taxon>Candidatus Thermobaculales</taxon>
        <taxon>Candidatus Thermobaculaceae</taxon>
        <taxon>Thermobaculum</taxon>
    </lineage>
</organism>
<keyword id="KW-0067">ATP-binding</keyword>
<keyword id="KW-1003">Cell membrane</keyword>
<keyword id="KW-0378">Hydrolase</keyword>
<keyword id="KW-0472">Membrane</keyword>
<keyword id="KW-0479">Metal-binding</keyword>
<keyword id="KW-0482">Metalloprotease</keyword>
<keyword id="KW-0547">Nucleotide-binding</keyword>
<keyword id="KW-0645">Protease</keyword>
<keyword id="KW-1185">Reference proteome</keyword>
<keyword id="KW-0812">Transmembrane</keyword>
<keyword id="KW-1133">Transmembrane helix</keyword>
<keyword id="KW-0862">Zinc</keyword>
<accession>D1CDT8</accession>
<sequence>MTNNQTDRPRPPGPESRRFDNNDKNNRNRWGPIPSWAWIVLIVALLLNWLVAPILFPEGKGAVSIPYTSFKQQLENNNVAEVTTQADKITGEFKQAVKVPGVDQPVKRFVTHIPAFGDDQLMSQLDQKGVIVNVQPESSTRSLLLSILISFGPTILFFLLFLWLISKAQSSQQGLFGLGKSRAKRYNATESTRVTFDDVAGIEEAKQELAEIVDFLKNPQKYQRLGGTIPKGVLLIGPPGTGKTLLARAVAGEAGVPFFSMSGSEFVEMIVGVGAARVRELFQQAKKEAPCIIFVDELDAIGRRRGSSINVGGHDEREQTLNQLLVEMDGFDSRQGVIVLAATNRPDVLDPALLRPGRFDRRVVVQRPDKVGRLKILQVHTRNVPLDPNLDLSEIAAATPGLVGADLRNLVNEAALLAARRGKNYVDREDFFDALEKITLGAERKLLISEEDRRRVAYHESGHALLGLLLPEADPVHKVTIIPRGQALGVTYQTPEDDRYNYTERYLRSRITAALGGRAAEELVFGTVTTGAENDLKQVTEIARQMVTRWGMSKEVGLVYLSPDGQEDFLGPNPITSREYSESLATVIDRETRRIIDECYAEALSLLNRERQRLDNLAEALLREESLDEQQIREIVGLGEKQPEPA</sequence>
<proteinExistence type="inferred from homology"/>
<gene>
    <name evidence="1" type="primary">ftsH</name>
    <name type="ordered locus">Tter_0172</name>
</gene>
<dbReference type="EC" id="3.4.24.-" evidence="1"/>
<dbReference type="EMBL" id="CP001825">
    <property type="protein sequence ID" value="ACZ41094.1"/>
    <property type="molecule type" value="Genomic_DNA"/>
</dbReference>
<dbReference type="RefSeq" id="WP_012874129.1">
    <property type="nucleotide sequence ID" value="NC_013525.1"/>
</dbReference>
<dbReference type="SMR" id="D1CDT8"/>
<dbReference type="STRING" id="525904.Tter_0172"/>
<dbReference type="KEGG" id="ttr:Tter_0172"/>
<dbReference type="eggNOG" id="COG0465">
    <property type="taxonomic scope" value="Bacteria"/>
</dbReference>
<dbReference type="HOGENOM" id="CLU_000688_16_2_0"/>
<dbReference type="OrthoDB" id="9809379at2"/>
<dbReference type="Proteomes" id="UP000000323">
    <property type="component" value="Chromosome 1"/>
</dbReference>
<dbReference type="GO" id="GO:0005886">
    <property type="term" value="C:plasma membrane"/>
    <property type="evidence" value="ECO:0007669"/>
    <property type="project" value="UniProtKB-SubCell"/>
</dbReference>
<dbReference type="GO" id="GO:0005524">
    <property type="term" value="F:ATP binding"/>
    <property type="evidence" value="ECO:0007669"/>
    <property type="project" value="UniProtKB-UniRule"/>
</dbReference>
<dbReference type="GO" id="GO:0016887">
    <property type="term" value="F:ATP hydrolysis activity"/>
    <property type="evidence" value="ECO:0007669"/>
    <property type="project" value="UniProtKB-UniRule"/>
</dbReference>
<dbReference type="GO" id="GO:0004176">
    <property type="term" value="F:ATP-dependent peptidase activity"/>
    <property type="evidence" value="ECO:0007669"/>
    <property type="project" value="InterPro"/>
</dbReference>
<dbReference type="GO" id="GO:0004222">
    <property type="term" value="F:metalloendopeptidase activity"/>
    <property type="evidence" value="ECO:0007669"/>
    <property type="project" value="InterPro"/>
</dbReference>
<dbReference type="GO" id="GO:0008270">
    <property type="term" value="F:zinc ion binding"/>
    <property type="evidence" value="ECO:0007669"/>
    <property type="project" value="UniProtKB-UniRule"/>
</dbReference>
<dbReference type="GO" id="GO:0030163">
    <property type="term" value="P:protein catabolic process"/>
    <property type="evidence" value="ECO:0007669"/>
    <property type="project" value="UniProtKB-UniRule"/>
</dbReference>
<dbReference type="GO" id="GO:0006508">
    <property type="term" value="P:proteolysis"/>
    <property type="evidence" value="ECO:0007669"/>
    <property type="project" value="UniProtKB-KW"/>
</dbReference>
<dbReference type="CDD" id="cd19501">
    <property type="entry name" value="RecA-like_FtsH"/>
    <property type="match status" value="1"/>
</dbReference>
<dbReference type="FunFam" id="1.10.8.60:FF:000001">
    <property type="entry name" value="ATP-dependent zinc metalloprotease FtsH"/>
    <property type="match status" value="1"/>
</dbReference>
<dbReference type="FunFam" id="1.20.58.760:FF:000001">
    <property type="entry name" value="ATP-dependent zinc metalloprotease FtsH"/>
    <property type="match status" value="1"/>
</dbReference>
<dbReference type="FunFam" id="3.40.50.300:FF:000001">
    <property type="entry name" value="ATP-dependent zinc metalloprotease FtsH"/>
    <property type="match status" value="1"/>
</dbReference>
<dbReference type="Gene3D" id="1.10.8.60">
    <property type="match status" value="1"/>
</dbReference>
<dbReference type="Gene3D" id="3.30.720.210">
    <property type="match status" value="1"/>
</dbReference>
<dbReference type="Gene3D" id="3.40.50.300">
    <property type="entry name" value="P-loop containing nucleotide triphosphate hydrolases"/>
    <property type="match status" value="1"/>
</dbReference>
<dbReference type="Gene3D" id="1.20.58.760">
    <property type="entry name" value="Peptidase M41"/>
    <property type="match status" value="1"/>
</dbReference>
<dbReference type="HAMAP" id="MF_01458">
    <property type="entry name" value="FtsH"/>
    <property type="match status" value="1"/>
</dbReference>
<dbReference type="InterPro" id="IPR003593">
    <property type="entry name" value="AAA+_ATPase"/>
</dbReference>
<dbReference type="InterPro" id="IPR041569">
    <property type="entry name" value="AAA_lid_3"/>
</dbReference>
<dbReference type="InterPro" id="IPR003959">
    <property type="entry name" value="ATPase_AAA_core"/>
</dbReference>
<dbReference type="InterPro" id="IPR003960">
    <property type="entry name" value="ATPase_AAA_CS"/>
</dbReference>
<dbReference type="InterPro" id="IPR005936">
    <property type="entry name" value="FtsH"/>
</dbReference>
<dbReference type="InterPro" id="IPR027417">
    <property type="entry name" value="P-loop_NTPase"/>
</dbReference>
<dbReference type="InterPro" id="IPR011546">
    <property type="entry name" value="Pept_M41_FtsH_extracell"/>
</dbReference>
<dbReference type="InterPro" id="IPR000642">
    <property type="entry name" value="Peptidase_M41"/>
</dbReference>
<dbReference type="InterPro" id="IPR037219">
    <property type="entry name" value="Peptidase_M41-like"/>
</dbReference>
<dbReference type="NCBIfam" id="TIGR01241">
    <property type="entry name" value="FtsH_fam"/>
    <property type="match status" value="1"/>
</dbReference>
<dbReference type="PANTHER" id="PTHR23076:SF97">
    <property type="entry name" value="ATP-DEPENDENT ZINC METALLOPROTEASE YME1L1"/>
    <property type="match status" value="1"/>
</dbReference>
<dbReference type="PANTHER" id="PTHR23076">
    <property type="entry name" value="METALLOPROTEASE M41 FTSH"/>
    <property type="match status" value="1"/>
</dbReference>
<dbReference type="Pfam" id="PF00004">
    <property type="entry name" value="AAA"/>
    <property type="match status" value="1"/>
</dbReference>
<dbReference type="Pfam" id="PF17862">
    <property type="entry name" value="AAA_lid_3"/>
    <property type="match status" value="1"/>
</dbReference>
<dbReference type="Pfam" id="PF06480">
    <property type="entry name" value="FtsH_ext"/>
    <property type="match status" value="1"/>
</dbReference>
<dbReference type="Pfam" id="PF01434">
    <property type="entry name" value="Peptidase_M41"/>
    <property type="match status" value="1"/>
</dbReference>
<dbReference type="SMART" id="SM00382">
    <property type="entry name" value="AAA"/>
    <property type="match status" value="1"/>
</dbReference>
<dbReference type="SUPFAM" id="SSF140990">
    <property type="entry name" value="FtsH protease domain-like"/>
    <property type="match status" value="1"/>
</dbReference>
<dbReference type="SUPFAM" id="SSF52540">
    <property type="entry name" value="P-loop containing nucleoside triphosphate hydrolases"/>
    <property type="match status" value="1"/>
</dbReference>
<dbReference type="PROSITE" id="PS00674">
    <property type="entry name" value="AAA"/>
    <property type="match status" value="1"/>
</dbReference>